<protein>
    <recommendedName>
        <fullName evidence="6">Type II inositol polyphosphate 5-phosphatase 15</fullName>
        <shortName evidence="6">At5PTase15</shortName>
        <ecNumber evidence="4">3.1.3.36</ecNumber>
        <ecNumber evidence="4">3.1.3.86</ecNumber>
    </recommendedName>
    <alternativeName>
        <fullName evidence="5">Protein FRAGILE FIBER 3</fullName>
    </alternativeName>
</protein>
<dbReference type="EC" id="3.1.3.36" evidence="4"/>
<dbReference type="EC" id="3.1.3.86" evidence="4"/>
<dbReference type="EMBL" id="AY761186">
    <property type="protein sequence ID" value="AAV87313.1"/>
    <property type="molecule type" value="mRNA"/>
</dbReference>
<dbReference type="EMBL" id="AY761190">
    <property type="protein sequence ID" value="AAV87317.1"/>
    <property type="molecule type" value="Genomic_DNA"/>
</dbReference>
<dbReference type="EMBL" id="AJ005682">
    <property type="protein sequence ID" value="CAB41466.1"/>
    <property type="molecule type" value="mRNA"/>
</dbReference>
<dbReference type="EMBL" id="AC001229">
    <property type="protein sequence ID" value="AAB60921.1"/>
    <property type="status" value="ALT_SEQ"/>
    <property type="molecule type" value="Genomic_DNA"/>
</dbReference>
<dbReference type="EMBL" id="CP002684">
    <property type="protein sequence ID" value="AEE34398.1"/>
    <property type="molecule type" value="Genomic_DNA"/>
</dbReference>
<dbReference type="EMBL" id="BT004211">
    <property type="protein sequence ID" value="AAO42229.1"/>
    <property type="molecule type" value="mRNA"/>
</dbReference>
<dbReference type="PIR" id="G96680">
    <property type="entry name" value="G96680"/>
</dbReference>
<dbReference type="RefSeq" id="NP_176736.2">
    <property type="nucleotide sequence ID" value="NM_105232.3"/>
</dbReference>
<dbReference type="SMR" id="Q84W55"/>
<dbReference type="BioGRID" id="28090">
    <property type="interactions" value="1"/>
</dbReference>
<dbReference type="FunCoup" id="Q84W55">
    <property type="interactions" value="484"/>
</dbReference>
<dbReference type="STRING" id="3702.Q84W55"/>
<dbReference type="iPTMnet" id="Q84W55"/>
<dbReference type="PaxDb" id="3702-AT1G65580.1"/>
<dbReference type="ProteomicsDB" id="228821"/>
<dbReference type="EnsemblPlants" id="AT1G65580.1">
    <property type="protein sequence ID" value="AT1G65580.1"/>
    <property type="gene ID" value="AT1G65580"/>
</dbReference>
<dbReference type="GeneID" id="842869"/>
<dbReference type="Gramene" id="AT1G65580.1">
    <property type="protein sequence ID" value="AT1G65580.1"/>
    <property type="gene ID" value="AT1G65580"/>
</dbReference>
<dbReference type="KEGG" id="ath:AT1G65580"/>
<dbReference type="Araport" id="AT1G65580"/>
<dbReference type="TAIR" id="AT1G65580">
    <property type="gene designation" value="FRA3"/>
</dbReference>
<dbReference type="eggNOG" id="KOG0565">
    <property type="taxonomic scope" value="Eukaryota"/>
</dbReference>
<dbReference type="HOGENOM" id="CLU_004721_0_1_1"/>
<dbReference type="InParanoid" id="Q84W55"/>
<dbReference type="OMA" id="QWDRNGN"/>
<dbReference type="OrthoDB" id="1925875at2759"/>
<dbReference type="PhylomeDB" id="Q84W55"/>
<dbReference type="BioCyc" id="ARA:AT1G65580-MONOMER"/>
<dbReference type="BRENDA" id="3.1.3.36">
    <property type="organism ID" value="399"/>
</dbReference>
<dbReference type="PRO" id="PR:Q84W55"/>
<dbReference type="Proteomes" id="UP000006548">
    <property type="component" value="Chromosome 1"/>
</dbReference>
<dbReference type="ExpressionAtlas" id="Q84W55">
    <property type="expression patterns" value="baseline and differential"/>
</dbReference>
<dbReference type="GO" id="GO:0052658">
    <property type="term" value="F:inositol-1,4,5-trisphosphate 5-phosphatase activity"/>
    <property type="evidence" value="ECO:0007669"/>
    <property type="project" value="RHEA"/>
</dbReference>
<dbReference type="GO" id="GO:0046872">
    <property type="term" value="F:metal ion binding"/>
    <property type="evidence" value="ECO:0007669"/>
    <property type="project" value="UniProtKB-KW"/>
</dbReference>
<dbReference type="GO" id="GO:0034485">
    <property type="term" value="F:phosphatidylinositol-3,4,5-trisphosphate 5-phosphatase activity"/>
    <property type="evidence" value="ECO:0007669"/>
    <property type="project" value="UniProtKB-EC"/>
</dbReference>
<dbReference type="GO" id="GO:0004439">
    <property type="term" value="F:phosphatidylinositol-4,5-bisphosphate 5-phosphatase activity"/>
    <property type="evidence" value="ECO:0007669"/>
    <property type="project" value="UniProtKB-EC"/>
</dbReference>
<dbReference type="GO" id="GO:0046856">
    <property type="term" value="P:phosphatidylinositol dephosphorylation"/>
    <property type="evidence" value="ECO:0007669"/>
    <property type="project" value="InterPro"/>
</dbReference>
<dbReference type="CDD" id="cd09074">
    <property type="entry name" value="INPP5c"/>
    <property type="match status" value="1"/>
</dbReference>
<dbReference type="FunFam" id="2.130.10.10:FF:002156">
    <property type="entry name" value="Type I inositol polyphosphate 5-phosphatase 12"/>
    <property type="match status" value="1"/>
</dbReference>
<dbReference type="FunFam" id="2.130.10.10:FF:001216">
    <property type="entry name" value="Type II inositol polyphosphate 5-phosphatase 15"/>
    <property type="match status" value="1"/>
</dbReference>
<dbReference type="FunFam" id="3.60.10.10:FF:000011">
    <property type="entry name" value="Type II inositol polyphosphate 5-phosphatase 15"/>
    <property type="match status" value="1"/>
</dbReference>
<dbReference type="Gene3D" id="3.60.10.10">
    <property type="entry name" value="Endonuclease/exonuclease/phosphatase"/>
    <property type="match status" value="1"/>
</dbReference>
<dbReference type="Gene3D" id="2.130.10.10">
    <property type="entry name" value="YVTN repeat-like/Quinoprotein amine dehydrogenase"/>
    <property type="match status" value="2"/>
</dbReference>
<dbReference type="InterPro" id="IPR056454">
    <property type="entry name" value="Beta-prop_IP5PC_F"/>
</dbReference>
<dbReference type="InterPro" id="IPR036691">
    <property type="entry name" value="Endo/exonu/phosph_ase_sf"/>
</dbReference>
<dbReference type="InterPro" id="IPR056455">
    <property type="entry name" value="Ig-like_IP5PC_F"/>
</dbReference>
<dbReference type="InterPro" id="IPR046985">
    <property type="entry name" value="IP5"/>
</dbReference>
<dbReference type="InterPro" id="IPR000300">
    <property type="entry name" value="IPPc"/>
</dbReference>
<dbReference type="InterPro" id="IPR015943">
    <property type="entry name" value="WD40/YVTN_repeat-like_dom_sf"/>
</dbReference>
<dbReference type="InterPro" id="IPR001680">
    <property type="entry name" value="WD40_rpt"/>
</dbReference>
<dbReference type="PANTHER" id="PTHR11200">
    <property type="entry name" value="INOSITOL 5-PHOSPHATASE"/>
    <property type="match status" value="1"/>
</dbReference>
<dbReference type="PANTHER" id="PTHR11200:SF300">
    <property type="entry name" value="TYPE II INOSITOL 1,4,5-TRISPHOSPHATE 5-PHOSPHATASE"/>
    <property type="match status" value="1"/>
</dbReference>
<dbReference type="Pfam" id="PF23754">
    <property type="entry name" value="Beta-prop_IP5PC_F"/>
    <property type="match status" value="1"/>
</dbReference>
<dbReference type="Pfam" id="PF22669">
    <property type="entry name" value="Exo_endo_phos2"/>
    <property type="match status" value="1"/>
</dbReference>
<dbReference type="Pfam" id="PF23755">
    <property type="entry name" value="Ig-like_IP5PC_F"/>
    <property type="match status" value="1"/>
</dbReference>
<dbReference type="SMART" id="SM00128">
    <property type="entry name" value="IPPc"/>
    <property type="match status" value="1"/>
</dbReference>
<dbReference type="SMART" id="SM00320">
    <property type="entry name" value="WD40"/>
    <property type="match status" value="5"/>
</dbReference>
<dbReference type="SUPFAM" id="SSF56219">
    <property type="entry name" value="DNase I-like"/>
    <property type="match status" value="1"/>
</dbReference>
<dbReference type="SUPFAM" id="SSF101908">
    <property type="entry name" value="Putative isomerase YbhE"/>
    <property type="match status" value="1"/>
</dbReference>
<dbReference type="PROSITE" id="PS00678">
    <property type="entry name" value="WD_REPEATS_1"/>
    <property type="match status" value="1"/>
</dbReference>
<gene>
    <name evidence="6" type="primary">IP5P15</name>
    <name evidence="5" type="synonym">FRA3</name>
    <name evidence="7" type="ordered locus">At1g65580</name>
    <name evidence="8" type="ORF">F5I14.11</name>
</gene>
<comment type="function">
    <text evidence="4">Has phosphatase activity toward PtdIns(4,5)P2, PtdIns(3,4,5)P3 and Ins(1,4,5)P3. Has a higher substrate affinity toward PtdIns(4,5)P2. Required for secondary wall synthesis and actin organization in fiber cells.</text>
</comment>
<comment type="catalytic activity">
    <reaction evidence="4">
        <text>a 1,2-diacyl-sn-glycero-3-phospho-(1D-myo-inositol-4,5-bisphosphate) + H2O = a 1,2-diacyl-sn-glycero-3-phospho-(1D-myo-inositol 4-phosphate) + phosphate</text>
        <dbReference type="Rhea" id="RHEA:22764"/>
        <dbReference type="ChEBI" id="CHEBI:15377"/>
        <dbReference type="ChEBI" id="CHEBI:43474"/>
        <dbReference type="ChEBI" id="CHEBI:58178"/>
        <dbReference type="ChEBI" id="CHEBI:58456"/>
        <dbReference type="EC" id="3.1.3.36"/>
    </reaction>
</comment>
<comment type="catalytic activity">
    <reaction evidence="4">
        <text>a 1,2-diacyl-sn-glycero-3-phospho-(1D-myo-inositol-3,4,5-trisphosphate) + H2O = a 1,2-diacyl-sn-glycero-3-phospho-(1D-myo-inositol-3,4-bisphosphate) + phosphate</text>
        <dbReference type="Rhea" id="RHEA:25528"/>
        <dbReference type="ChEBI" id="CHEBI:15377"/>
        <dbReference type="ChEBI" id="CHEBI:43474"/>
        <dbReference type="ChEBI" id="CHEBI:57658"/>
        <dbReference type="ChEBI" id="CHEBI:57836"/>
        <dbReference type="EC" id="3.1.3.86"/>
    </reaction>
</comment>
<comment type="catalytic activity">
    <reaction evidence="4">
        <text>1D-myo-inositol 1,4,5-trisphosphate + H2O = 1D-myo-inositol 1,4-bisphosphate + phosphate</text>
        <dbReference type="Rhea" id="RHEA:19797"/>
        <dbReference type="ChEBI" id="CHEBI:15377"/>
        <dbReference type="ChEBI" id="CHEBI:43474"/>
        <dbReference type="ChEBI" id="CHEBI:58282"/>
        <dbReference type="ChEBI" id="CHEBI:203600"/>
    </reaction>
</comment>
<comment type="cofactor">
    <cofactor evidence="4">
        <name>Mg(2+)</name>
        <dbReference type="ChEBI" id="CHEBI:18420"/>
    </cofactor>
</comment>
<comment type="biophysicochemical properties">
    <kinetics>
        <KM>63 uM for PtdIns(4,5)P2 (at pH 7.0 and 22 degrees Celsius)</KM>
        <KM>299 uM for PtdIns(3,4,5)P3 (at pH 7.0 and 22 degrees Celsius)</KM>
        <KM>1040 uM for PtdIns(1,4,5)P3 (at pH 6.5 and 22 degrees Celsius)</KM>
        <Vmax>240.0 pmol/min/ug enzyme with PtdIns(4,5)P2 as substrate (at pH 7.0 and 22 degrees Celsius)</Vmax>
        <Vmax>365.0 pmol/min/ug enzyme with PtdIns(3,4,5)P3 as substrate (at pH 7.0 and 22 degrees Celsius)</Vmax>
        <Vmax>504.0 pmol/min/ug enzyme with Ins(1,4,5)P3 as substrate (at pH 6.5 and 22 degrees Celsius)</Vmax>
    </kinetics>
    <phDependence>
        <text>Optimum pH is 6.5 with Ins(1,4,5)P3 as substrate, 7.5 with PtdIns(3,4,5)P3 as substrate, and 6.5-8.5 with PtdIns(4,5)P2 as substrate.</text>
    </phDependence>
    <temperatureDependence>
        <text>Optimum temperature is 22 degrees Celsius with Ins(1,4,5)P3 as substrate, and 22-37 degrees Celsius with PtdIns(4,5)P2 and PtdIns(3,4,5)P3 as substrates.</text>
    </temperatureDependence>
</comment>
<comment type="tissue specificity">
    <text evidence="4">Predominantly expressed in interfascicular fibers and vascular bundles. Expressed in seedlings, stems, roots and flowers. Expressed at lower level in mature leaves.</text>
</comment>
<comment type="similarity">
    <text evidence="6">Belongs to the inositol polyphosphate 5-phosphatase family.</text>
</comment>
<comment type="sequence caution" evidence="6">
    <conflict type="erroneous gene model prediction">
        <sequence resource="EMBL-CDS" id="AAB60921"/>
    </conflict>
</comment>
<feature type="chain" id="PRO_0000209726" description="Type II inositol polyphosphate 5-phosphatase 15">
    <location>
        <begin position="1"/>
        <end position="1101"/>
    </location>
</feature>
<feature type="repeat" description="WD 1">
    <location>
        <begin position="121"/>
        <end position="162"/>
    </location>
</feature>
<feature type="repeat" description="WD 2">
    <location>
        <begin position="180"/>
        <end position="219"/>
    </location>
</feature>
<feature type="repeat" description="WD 3">
    <location>
        <begin position="225"/>
        <end position="263"/>
    </location>
</feature>
<feature type="repeat" description="WD 4">
    <location>
        <begin position="403"/>
        <end position="432"/>
    </location>
</feature>
<feature type="repeat" description="WD 5">
    <location>
        <begin position="433"/>
        <end position="481"/>
    </location>
</feature>
<feature type="repeat" description="WD 6">
    <location>
        <begin position="483"/>
        <end position="519"/>
    </location>
</feature>
<feature type="region of interest" description="Disordered" evidence="3">
    <location>
        <begin position="31"/>
        <end position="54"/>
    </location>
</feature>
<feature type="region of interest" description="Catalytic 1" evidence="2">
    <location>
        <begin position="749"/>
        <end position="765"/>
    </location>
</feature>
<feature type="region of interest" description="Catalytic 2" evidence="2">
    <location>
        <begin position="828"/>
        <end position="843"/>
    </location>
</feature>
<feature type="compositionally biased region" description="Low complexity" evidence="3">
    <location>
        <begin position="31"/>
        <end position="40"/>
    </location>
</feature>
<feature type="cross-link" description="Glycyl lysine isopeptide (Lys-Gly) (interchain with G-Cter in ubiquitin)" evidence="1">
    <location>
        <position position="907"/>
    </location>
</feature>
<feature type="mutagenesis site" description="In fra3; induces a dramatic reduction in secondary wall thickness and a concomitant decrease in stem strength. Causes elevated levels of PtdIns(4,5)P2 and Ins(1,4,5)P3." evidence="4">
    <original>A</original>
    <variation>V</variation>
    <location>
        <position position="833"/>
    </location>
</feature>
<feature type="sequence conflict" description="In Ref. 5; AAO42229." evidence="6" ref="5">
    <original>G</original>
    <variation>R</variation>
    <location>
        <position position="583"/>
    </location>
</feature>
<feature type="sequence conflict" description="In Ref. 2; CAB41466." evidence="6" ref="2">
    <original>L</original>
    <variation>F</variation>
    <location>
        <position position="847"/>
    </location>
</feature>
<proteinExistence type="evidence at protein level"/>
<keyword id="KW-0378">Hydrolase</keyword>
<keyword id="KW-1017">Isopeptide bond</keyword>
<keyword id="KW-0460">Magnesium</keyword>
<keyword id="KW-0479">Metal-binding</keyword>
<keyword id="KW-1185">Reference proteome</keyword>
<keyword id="KW-0677">Repeat</keyword>
<keyword id="KW-0832">Ubl conjugation</keyword>
<keyword id="KW-0853">WD repeat</keyword>
<reference key="1">
    <citation type="journal article" date="2004" name="Plant Cell">
        <title>FRAGILE FIBER3, an Arabidopsis gene encoding a type II inositol polyphosphate 5-phosphatase, is required for secondary wall synthesis and actin organization in fiber cells.</title>
        <authorList>
            <person name="Zhong R."/>
            <person name="Burk D.H."/>
            <person name="Morrison W.H. III"/>
            <person name="Ye Z.-H."/>
        </authorList>
    </citation>
    <scope>NUCLEOTIDE SEQUENCE [GENOMIC DNA / MRNA]</scope>
    <scope>FUNCTION</scope>
    <scope>CATALYTIC ACTIVITY</scope>
    <scope>BIOPHYSICOCHEMICAL PROPERTIES</scope>
    <scope>TISSUE SPECIFICITY</scope>
    <scope>COFACTOR</scope>
    <scope>MUTAGENESIS OF ALA-833</scope>
    <source>
        <strain>cv. Columbia</strain>
    </source>
</reference>
<reference key="2">
    <citation type="submission" date="1998-04" db="EMBL/GenBank/DDBJ databases">
        <authorList>
            <person name="Xue H."/>
            <person name="Mueller-Roeber B."/>
        </authorList>
    </citation>
    <scope>NUCLEOTIDE SEQUENCE [MRNA]</scope>
</reference>
<reference key="3">
    <citation type="journal article" date="2000" name="Nature">
        <title>Sequence and analysis of chromosome 1 of the plant Arabidopsis thaliana.</title>
        <authorList>
            <person name="Theologis A."/>
            <person name="Ecker J.R."/>
            <person name="Palm C.J."/>
            <person name="Federspiel N.A."/>
            <person name="Kaul S."/>
            <person name="White O."/>
            <person name="Alonso J."/>
            <person name="Altafi H."/>
            <person name="Araujo R."/>
            <person name="Bowman C.L."/>
            <person name="Brooks S.Y."/>
            <person name="Buehler E."/>
            <person name="Chan A."/>
            <person name="Chao Q."/>
            <person name="Chen H."/>
            <person name="Cheuk R.F."/>
            <person name="Chin C.W."/>
            <person name="Chung M.K."/>
            <person name="Conn L."/>
            <person name="Conway A.B."/>
            <person name="Conway A.R."/>
            <person name="Creasy T.H."/>
            <person name="Dewar K."/>
            <person name="Dunn P."/>
            <person name="Etgu P."/>
            <person name="Feldblyum T.V."/>
            <person name="Feng J.-D."/>
            <person name="Fong B."/>
            <person name="Fujii C.Y."/>
            <person name="Gill J.E."/>
            <person name="Goldsmith A.D."/>
            <person name="Haas B."/>
            <person name="Hansen N.F."/>
            <person name="Hughes B."/>
            <person name="Huizar L."/>
            <person name="Hunter J.L."/>
            <person name="Jenkins J."/>
            <person name="Johnson-Hopson C."/>
            <person name="Khan S."/>
            <person name="Khaykin E."/>
            <person name="Kim C.J."/>
            <person name="Koo H.L."/>
            <person name="Kremenetskaia I."/>
            <person name="Kurtz D.B."/>
            <person name="Kwan A."/>
            <person name="Lam B."/>
            <person name="Langin-Hooper S."/>
            <person name="Lee A."/>
            <person name="Lee J.M."/>
            <person name="Lenz C.A."/>
            <person name="Li J.H."/>
            <person name="Li Y.-P."/>
            <person name="Lin X."/>
            <person name="Liu S.X."/>
            <person name="Liu Z.A."/>
            <person name="Luros J.S."/>
            <person name="Maiti R."/>
            <person name="Marziali A."/>
            <person name="Militscher J."/>
            <person name="Miranda M."/>
            <person name="Nguyen M."/>
            <person name="Nierman W.C."/>
            <person name="Osborne B.I."/>
            <person name="Pai G."/>
            <person name="Peterson J."/>
            <person name="Pham P.K."/>
            <person name="Rizzo M."/>
            <person name="Rooney T."/>
            <person name="Rowley D."/>
            <person name="Sakano H."/>
            <person name="Salzberg S.L."/>
            <person name="Schwartz J.R."/>
            <person name="Shinn P."/>
            <person name="Southwick A.M."/>
            <person name="Sun H."/>
            <person name="Tallon L.J."/>
            <person name="Tambunga G."/>
            <person name="Toriumi M.J."/>
            <person name="Town C.D."/>
            <person name="Utterback T."/>
            <person name="Van Aken S."/>
            <person name="Vaysberg M."/>
            <person name="Vysotskaia V.S."/>
            <person name="Walker M."/>
            <person name="Wu D."/>
            <person name="Yu G."/>
            <person name="Fraser C.M."/>
            <person name="Venter J.C."/>
            <person name="Davis R.W."/>
        </authorList>
    </citation>
    <scope>NUCLEOTIDE SEQUENCE [LARGE SCALE GENOMIC DNA]</scope>
    <source>
        <strain>cv. Columbia</strain>
    </source>
</reference>
<reference key="4">
    <citation type="journal article" date="2017" name="Plant J.">
        <title>Araport11: a complete reannotation of the Arabidopsis thaliana reference genome.</title>
        <authorList>
            <person name="Cheng C.Y."/>
            <person name="Krishnakumar V."/>
            <person name="Chan A.P."/>
            <person name="Thibaud-Nissen F."/>
            <person name="Schobel S."/>
            <person name="Town C.D."/>
        </authorList>
    </citation>
    <scope>GENOME REANNOTATION</scope>
    <source>
        <strain>cv. Columbia</strain>
    </source>
</reference>
<reference key="5">
    <citation type="journal article" date="2003" name="Science">
        <title>Empirical analysis of transcriptional activity in the Arabidopsis genome.</title>
        <authorList>
            <person name="Yamada K."/>
            <person name="Lim J."/>
            <person name="Dale J.M."/>
            <person name="Chen H."/>
            <person name="Shinn P."/>
            <person name="Palm C.J."/>
            <person name="Southwick A.M."/>
            <person name="Wu H.C."/>
            <person name="Kim C.J."/>
            <person name="Nguyen M."/>
            <person name="Pham P.K."/>
            <person name="Cheuk R.F."/>
            <person name="Karlin-Newmann G."/>
            <person name="Liu S.X."/>
            <person name="Lam B."/>
            <person name="Sakano H."/>
            <person name="Wu T."/>
            <person name="Yu G."/>
            <person name="Miranda M."/>
            <person name="Quach H.L."/>
            <person name="Tripp M."/>
            <person name="Chang C.H."/>
            <person name="Lee J.M."/>
            <person name="Toriumi M.J."/>
            <person name="Chan M.M."/>
            <person name="Tang C.C."/>
            <person name="Onodera C.S."/>
            <person name="Deng J.M."/>
            <person name="Akiyama K."/>
            <person name="Ansari Y."/>
            <person name="Arakawa T."/>
            <person name="Banh J."/>
            <person name="Banno F."/>
            <person name="Bowser L."/>
            <person name="Brooks S.Y."/>
            <person name="Carninci P."/>
            <person name="Chao Q."/>
            <person name="Choy N."/>
            <person name="Enju A."/>
            <person name="Goldsmith A.D."/>
            <person name="Gurjal M."/>
            <person name="Hansen N.F."/>
            <person name="Hayashizaki Y."/>
            <person name="Johnson-Hopson C."/>
            <person name="Hsuan V.W."/>
            <person name="Iida K."/>
            <person name="Karnes M."/>
            <person name="Khan S."/>
            <person name="Koesema E."/>
            <person name="Ishida J."/>
            <person name="Jiang P.X."/>
            <person name="Jones T."/>
            <person name="Kawai J."/>
            <person name="Kamiya A."/>
            <person name="Meyers C."/>
            <person name="Nakajima M."/>
            <person name="Narusaka M."/>
            <person name="Seki M."/>
            <person name="Sakurai T."/>
            <person name="Satou M."/>
            <person name="Tamse R."/>
            <person name="Vaysberg M."/>
            <person name="Wallender E.K."/>
            <person name="Wong C."/>
            <person name="Yamamura Y."/>
            <person name="Yuan S."/>
            <person name="Shinozaki K."/>
            <person name="Davis R.W."/>
            <person name="Theologis A."/>
            <person name="Ecker J.R."/>
        </authorList>
    </citation>
    <scope>NUCLEOTIDE SEQUENCE [LARGE SCALE MRNA]</scope>
    <source>
        <strain>cv. Columbia</strain>
    </source>
</reference>
<reference key="6">
    <citation type="journal article" date="2001" name="Plant Physiol.">
        <title>Molecular characterization of At5PTase1, an inositol phosphatase capable of terminating inositol trisphosphate signaling.</title>
        <authorList>
            <person name="Berdy S.E."/>
            <person name="Kudla J."/>
            <person name="Gruissem W."/>
            <person name="Gillaspy G.E."/>
        </authorList>
    </citation>
    <scope>GENE FAMILY</scope>
</reference>
<organism>
    <name type="scientific">Arabidopsis thaliana</name>
    <name type="common">Mouse-ear cress</name>
    <dbReference type="NCBI Taxonomy" id="3702"/>
    <lineage>
        <taxon>Eukaryota</taxon>
        <taxon>Viridiplantae</taxon>
        <taxon>Streptophyta</taxon>
        <taxon>Embryophyta</taxon>
        <taxon>Tracheophyta</taxon>
        <taxon>Spermatophyta</taxon>
        <taxon>Magnoliopsida</taxon>
        <taxon>eudicotyledons</taxon>
        <taxon>Gunneridae</taxon>
        <taxon>Pentapetalae</taxon>
        <taxon>rosids</taxon>
        <taxon>malvids</taxon>
        <taxon>Brassicales</taxon>
        <taxon>Brassicaceae</taxon>
        <taxon>Camelineae</taxon>
        <taxon>Arabidopsis</taxon>
    </lineage>
</organism>
<evidence type="ECO:0000250" key="1">
    <source>
        <dbReference type="UniProtKB" id="O80560"/>
    </source>
</evidence>
<evidence type="ECO:0000250" key="2">
    <source>
        <dbReference type="UniProtKB" id="Q84MA2"/>
    </source>
</evidence>
<evidence type="ECO:0000256" key="3">
    <source>
        <dbReference type="SAM" id="MobiDB-lite"/>
    </source>
</evidence>
<evidence type="ECO:0000269" key="4">
    <source>
    </source>
</evidence>
<evidence type="ECO:0000303" key="5">
    <source>
    </source>
</evidence>
<evidence type="ECO:0000305" key="6"/>
<evidence type="ECO:0000312" key="7">
    <source>
        <dbReference type="Araport" id="AT1G65580"/>
    </source>
</evidence>
<evidence type="ECO:0000312" key="8">
    <source>
        <dbReference type="EMBL" id="AAB60921.1"/>
    </source>
</evidence>
<accession>Q84W55</accession>
<accession>O04475</accession>
<accession>Q5MK18</accession>
<accession>Q9XFT1</accession>
<sequence length="1101" mass="121711">MEDRQNDQNDDVFSFFSPSFSAATPSTLFNRSAYSSSSSSGDDESQPSVDDSNKRIDYMIQFLDRRLSEDGNHDGIGDGNGSDSLPEFVGKCGESGIFKVPIRSAVHPNRPPSLDVRPHPLRETQIGRFLRTMTSTERQLWTGGEDGALRVWEFSELYGSGRGLEVEDTAPYKESLGNEFGSAAVVCMIGDEGSRVVWSGHRDGRIRCWRLRGDHGIEEALSWQAHRGPVLSIAISAYGDIWSGSEGGALKVWPWDGALGKSLSLKMEERHMAALAVERSYIDPRNMVSANGFANTLTSDVTFLVSDHTRARVWSASPLTFAIWDARTRDLIKVFNIDGQLENRPENSVYPDFGSEEEGKMKVTASKKEKAQSSLGFFQRSRNAIMGAADAVRRAATKGGFCDDSRKTEAIVISVDGMIWTGSSNGILMRWDGNGNCLQEFAYESSGILCMFTFCSRLWVGYSNGTVQVWDLEGKLLGGWVAHSGPVIKMAIGAGYLFTLANHGGIRGWNVTSPGPLDNVLRAELAGKEFLYSRIENLKILAGTWNVGEGRASTDSLVSWLGCAATGVEIVVVGLQEVEMGAGVLAMSAAKETVGLEGSPLGQWWLDMIGKTLDEGSSFVRVGSRQLAGLLICVWVRHDLKPHVGDVDAAAVPCGFGRAIGNKGAVGVRLRMYDRVLCFVNCHFAAHLEAVNRRNADFDHVYRTMTFSRQSSSLNAGVAGASFGVTMPRGGNALGVNTIEARPELSEADMVIFLGDFNYRLDDITYDETRDFISQRCFDWLREKDQLHTEMEAGNVFQGMREAIIRFPPTYKFERHQAGLAGYDSGEKKRIPAWCDRILYRDNKKHLGAECSLDCPVVSSISQYDACMEVTDSDHKPVRCVFSVKIARVDESVRRQEYGNIINSNKKIKVLLGELSKVPETIVSTNNIILQNQDSTILRITNKSEKNIAFFKIICEGQSKIEEDGQAHDHRARGSFGFPQWLEVSPGTGTIKPNQIAEVSVHLEDFPTVEEFVDGVAQNSWCEDTRDKEVILVLVVHGRFSTETRKHRIRVRHCPRGGPAKNHFNDGTKTSGQINALHRSDYHQLSNTLDVVEQLKNLHSP</sequence>
<name>IP5PF_ARATH</name>